<proteinExistence type="inferred from homology"/>
<gene>
    <name evidence="1" type="primary">rpsP</name>
    <name type="ordered locus">ABC2293</name>
</gene>
<dbReference type="EMBL" id="AP006627">
    <property type="protein sequence ID" value="BAD64828.1"/>
    <property type="molecule type" value="Genomic_DNA"/>
</dbReference>
<dbReference type="RefSeq" id="WP_011247136.1">
    <property type="nucleotide sequence ID" value="NC_006582.1"/>
</dbReference>
<dbReference type="SMR" id="Q5WFN2"/>
<dbReference type="STRING" id="66692.ABC2293"/>
<dbReference type="GeneID" id="86926457"/>
<dbReference type="KEGG" id="bcl:ABC2293"/>
<dbReference type="eggNOG" id="COG0228">
    <property type="taxonomic scope" value="Bacteria"/>
</dbReference>
<dbReference type="HOGENOM" id="CLU_100590_5_0_9"/>
<dbReference type="OrthoDB" id="9807878at2"/>
<dbReference type="Proteomes" id="UP000001168">
    <property type="component" value="Chromosome"/>
</dbReference>
<dbReference type="GO" id="GO:0005737">
    <property type="term" value="C:cytoplasm"/>
    <property type="evidence" value="ECO:0007669"/>
    <property type="project" value="UniProtKB-ARBA"/>
</dbReference>
<dbReference type="GO" id="GO:0015935">
    <property type="term" value="C:small ribosomal subunit"/>
    <property type="evidence" value="ECO:0007669"/>
    <property type="project" value="TreeGrafter"/>
</dbReference>
<dbReference type="GO" id="GO:0003735">
    <property type="term" value="F:structural constituent of ribosome"/>
    <property type="evidence" value="ECO:0007669"/>
    <property type="project" value="InterPro"/>
</dbReference>
<dbReference type="GO" id="GO:0006412">
    <property type="term" value="P:translation"/>
    <property type="evidence" value="ECO:0007669"/>
    <property type="project" value="UniProtKB-UniRule"/>
</dbReference>
<dbReference type="FunFam" id="3.30.1320.10:FF:000002">
    <property type="entry name" value="30S ribosomal protein S16"/>
    <property type="match status" value="1"/>
</dbReference>
<dbReference type="Gene3D" id="3.30.1320.10">
    <property type="match status" value="1"/>
</dbReference>
<dbReference type="HAMAP" id="MF_00385">
    <property type="entry name" value="Ribosomal_bS16"/>
    <property type="match status" value="1"/>
</dbReference>
<dbReference type="InterPro" id="IPR000307">
    <property type="entry name" value="Ribosomal_bS16"/>
</dbReference>
<dbReference type="InterPro" id="IPR023803">
    <property type="entry name" value="Ribosomal_bS16_dom_sf"/>
</dbReference>
<dbReference type="NCBIfam" id="TIGR00002">
    <property type="entry name" value="S16"/>
    <property type="match status" value="1"/>
</dbReference>
<dbReference type="PANTHER" id="PTHR12919">
    <property type="entry name" value="30S RIBOSOMAL PROTEIN S16"/>
    <property type="match status" value="1"/>
</dbReference>
<dbReference type="PANTHER" id="PTHR12919:SF20">
    <property type="entry name" value="SMALL RIBOSOMAL SUBUNIT PROTEIN BS16M"/>
    <property type="match status" value="1"/>
</dbReference>
<dbReference type="Pfam" id="PF00886">
    <property type="entry name" value="Ribosomal_S16"/>
    <property type="match status" value="1"/>
</dbReference>
<dbReference type="SUPFAM" id="SSF54565">
    <property type="entry name" value="Ribosomal protein S16"/>
    <property type="match status" value="1"/>
</dbReference>
<protein>
    <recommendedName>
        <fullName evidence="1">Small ribosomal subunit protein bS16</fullName>
    </recommendedName>
    <alternativeName>
        <fullName evidence="2">30S ribosomal protein S16</fullName>
    </alternativeName>
</protein>
<sequence length="90" mass="10235">MAVKIRLKRMGSKKAPFYRVVVADSRFPRDGRFIEEIGTYNPIAQPAQVNIKEDKALEWMKKGAKPSDTVRSLFSNAGLMEKLHNEKNGK</sequence>
<feature type="chain" id="PRO_0000243773" description="Small ribosomal subunit protein bS16">
    <location>
        <begin position="1"/>
        <end position="90"/>
    </location>
</feature>
<accession>Q5WFN2</accession>
<comment type="similarity">
    <text evidence="1">Belongs to the bacterial ribosomal protein bS16 family.</text>
</comment>
<organism>
    <name type="scientific">Shouchella clausii (strain KSM-K16)</name>
    <name type="common">Alkalihalobacillus clausii</name>
    <dbReference type="NCBI Taxonomy" id="66692"/>
    <lineage>
        <taxon>Bacteria</taxon>
        <taxon>Bacillati</taxon>
        <taxon>Bacillota</taxon>
        <taxon>Bacilli</taxon>
        <taxon>Bacillales</taxon>
        <taxon>Bacillaceae</taxon>
        <taxon>Shouchella</taxon>
    </lineage>
</organism>
<keyword id="KW-1185">Reference proteome</keyword>
<keyword id="KW-0687">Ribonucleoprotein</keyword>
<keyword id="KW-0689">Ribosomal protein</keyword>
<evidence type="ECO:0000255" key="1">
    <source>
        <dbReference type="HAMAP-Rule" id="MF_00385"/>
    </source>
</evidence>
<evidence type="ECO:0000305" key="2"/>
<name>RS16_SHOC1</name>
<reference key="1">
    <citation type="submission" date="2003-10" db="EMBL/GenBank/DDBJ databases">
        <title>The complete genome sequence of the alkaliphilic Bacillus clausii KSM-K16.</title>
        <authorList>
            <person name="Takaki Y."/>
            <person name="Kageyama Y."/>
            <person name="Shimamura S."/>
            <person name="Suzuki H."/>
            <person name="Nishi S."/>
            <person name="Hatada Y."/>
            <person name="Kawai S."/>
            <person name="Ito S."/>
            <person name="Horikoshi K."/>
        </authorList>
    </citation>
    <scope>NUCLEOTIDE SEQUENCE [LARGE SCALE GENOMIC DNA]</scope>
    <source>
        <strain>KSM-K16</strain>
    </source>
</reference>